<comment type="function">
    <text evidence="1 2 3">At high concentrations, acts as a pore former in cellular membranes and causes the leakage of the cells. At submicromolar concentrations, degranulates granulocytes and has a weak hemolytic activity against human erythrocytes. Also strongly inhibits the production of superoxide anions. Has a strong antibacterial activity against Gram-negative bacteria but is less active against Gram-positive bacteria. Also has antifungal activity.</text>
</comment>
<comment type="subcellular location">
    <subcellularLocation>
        <location evidence="1">Secreted</location>
    </subcellularLocation>
    <subcellularLocation>
        <location evidence="1">Target cell membrane</location>
    </subcellularLocation>
    <text>Forms a helical membrane channel in the prey.</text>
</comment>
<comment type="tissue specificity">
    <text evidence="1">Expressed by the venom gland.</text>
</comment>
<comment type="mass spectrometry"/>
<comment type="similarity">
    <text evidence="6">Belongs to the non-disulfide-bridged peptide (NDBP) superfamily. Long chain multifunctional peptide (group 2) family.</text>
</comment>
<sequence>MNRKLLFVTLMVTMLVMQPSEGGKVWDWIKSTAKKLWNSEPVKELKNTALNAAKNLVAEKIGATPSEAGQMPFDEFMDILYE</sequence>
<reference key="1">
    <citation type="submission" date="2003-10" db="EMBL/GenBank/DDBJ databases">
        <title>Precursor organization and gene structure of scorpion venom antimicrobial peptides.</title>
        <authorList>
            <person name="Zhu S."/>
            <person name="Tytgat J."/>
        </authorList>
    </citation>
    <scope>NUCLEOTIDE SEQUENCE [GENOMIC DNA / MRNA]</scope>
    <source>
        <tissue>Venom gland</tissue>
    </source>
</reference>
<reference key="2">
    <citation type="journal article" date="2002" name="Eur. J. Biochem.">
        <title>Antibacterial and antifungal properties of alpha-helical, cationic peptides in the venom of scorpions from southern Africa.</title>
        <authorList>
            <person name="Moerman L.F.A."/>
            <person name="Bosteels S."/>
            <person name="Noppe W."/>
            <person name="Willems J."/>
            <person name="Clynen E."/>
            <person name="Schoofs L."/>
            <person name="Thevissen K."/>
            <person name="Tytgat J."/>
            <person name="Van Eldere J."/>
            <person name="van der Walt J."/>
            <person name="Verdonck F."/>
        </authorList>
    </citation>
    <scope>PROTEIN SEQUENCE OF 23-66</scope>
    <scope>FUNCTION</scope>
    <scope>SUBCELLULAR LOCATION</scope>
    <scope>TISSUE SPECIFICITY</scope>
    <scope>MASS SPECTROMETRY</scope>
    <scope>CIRCULAR DICHROISM ANALYSIS</scope>
    <scope>SYNTHESIS OF 23-66</scope>
    <source>
        <tissue>Venom</tissue>
    </source>
</reference>
<reference key="3">
    <citation type="journal article" date="2002" name="Toxicon">
        <title>Cationic peptides from scorpion venom can stimulate and inhibit polymorphonuclear granulocytes.</title>
        <authorList>
            <person name="Willems J."/>
            <person name="Noppe W."/>
            <person name="Moerman L."/>
            <person name="van der Walt J."/>
            <person name="Verdonck F."/>
        </authorList>
    </citation>
    <scope>FUNCTION</scope>
    <scope>SYNTHESIS OF 23-66</scope>
    <source>
        <tissue>Venom</tissue>
    </source>
</reference>
<reference key="4">
    <citation type="journal article" date="2003" name="Biochem. Biophys. Res. Commun.">
        <title>Antimicrobial peptides from scorpion venom induce Ca(2+) signaling in HL-60 cells.</title>
        <authorList>
            <person name="Moerman L."/>
            <person name="Verdonck F."/>
            <person name="Willems J."/>
            <person name="Tytgat J."/>
            <person name="Bosteels S."/>
        </authorList>
    </citation>
    <scope>FUNCTION</scope>
</reference>
<reference key="5">
    <citation type="journal article" date="2005" name="IUBMB Life">
        <title>Scorpion venom peptides without disulfide bridges.</title>
        <authorList>
            <person name="Zeng X.C."/>
            <person name="Corzo G."/>
            <person name="Hahin R."/>
        </authorList>
    </citation>
    <scope>NOMENCLATURE</scope>
</reference>
<reference key="6">
    <citation type="journal article" date="2014" name="Peptides">
        <title>Scorpion venom peptides with no disulfide bridges: a review.</title>
        <authorList>
            <person name="Almaaytah A."/>
            <person name="Albalas Q."/>
        </authorList>
    </citation>
    <scope>NOMENCLATURE</scope>
</reference>
<evidence type="ECO:0000269" key="1">
    <source>
    </source>
</evidence>
<evidence type="ECO:0000269" key="2">
    <source>
    </source>
</evidence>
<evidence type="ECO:0000269" key="3">
    <source>
    </source>
</evidence>
<evidence type="ECO:0000303" key="4">
    <source>
    </source>
</evidence>
<evidence type="ECO:0000303" key="5">
    <source>
    </source>
</evidence>
<evidence type="ECO:0000305" key="6"/>
<dbReference type="EMBL" id="AY427948">
    <property type="protein sequence ID" value="AAQ94360.1"/>
    <property type="molecule type" value="mRNA"/>
</dbReference>
<dbReference type="EMBL" id="AY427950">
    <property type="protein sequence ID" value="AAQ94362.1"/>
    <property type="molecule type" value="Genomic_DNA"/>
</dbReference>
<dbReference type="SMR" id="P83313"/>
<dbReference type="GO" id="GO:0005576">
    <property type="term" value="C:extracellular region"/>
    <property type="evidence" value="ECO:0007669"/>
    <property type="project" value="UniProtKB-SubCell"/>
</dbReference>
<dbReference type="GO" id="GO:0016020">
    <property type="term" value="C:membrane"/>
    <property type="evidence" value="ECO:0007669"/>
    <property type="project" value="UniProtKB-KW"/>
</dbReference>
<dbReference type="GO" id="GO:0044218">
    <property type="term" value="C:other organism cell membrane"/>
    <property type="evidence" value="ECO:0007669"/>
    <property type="project" value="UniProtKB-KW"/>
</dbReference>
<dbReference type="GO" id="GO:0042742">
    <property type="term" value="P:defense response to bacterium"/>
    <property type="evidence" value="ECO:0007669"/>
    <property type="project" value="UniProtKB-KW"/>
</dbReference>
<dbReference type="GO" id="GO:0050832">
    <property type="term" value="P:defense response to fungus"/>
    <property type="evidence" value="ECO:0007669"/>
    <property type="project" value="UniProtKB-KW"/>
</dbReference>
<dbReference type="GO" id="GO:0044179">
    <property type="term" value="P:hemolysis in another organism"/>
    <property type="evidence" value="ECO:0007669"/>
    <property type="project" value="InterPro"/>
</dbReference>
<dbReference type="GO" id="GO:0006811">
    <property type="term" value="P:monoatomic ion transport"/>
    <property type="evidence" value="ECO:0007669"/>
    <property type="project" value="UniProtKB-KW"/>
</dbReference>
<dbReference type="InterPro" id="IPR012526">
    <property type="entry name" value="Antimicrobial_7"/>
</dbReference>
<dbReference type="Pfam" id="PF08102">
    <property type="entry name" value="Antimicrobial_7"/>
    <property type="match status" value="1"/>
</dbReference>
<keyword id="KW-0044">Antibiotic</keyword>
<keyword id="KW-0929">Antimicrobial</keyword>
<keyword id="KW-0204">Cytolysis</keyword>
<keyword id="KW-0903">Direct protein sequencing</keyword>
<keyword id="KW-0295">Fungicide</keyword>
<keyword id="KW-0354">Hemolysis</keyword>
<keyword id="KW-0406">Ion transport</keyword>
<keyword id="KW-0472">Membrane</keyword>
<keyword id="KW-0964">Secreted</keyword>
<keyword id="KW-0732">Signal</keyword>
<keyword id="KW-1052">Target cell membrane</keyword>
<keyword id="KW-1053">Target membrane</keyword>
<keyword id="KW-0812">Transmembrane</keyword>
<keyword id="KW-0813">Transport</keyword>
<accession>P83313</accession>
<accession>Q5VJS8</accession>
<accession>Q5VJT0</accession>
<protein>
    <recommendedName>
        <fullName>Opistoporin-1</fullName>
        <shortName>OP1</shortName>
    </recommendedName>
    <alternativeName>
        <fullName evidence="5">Non-disulfide-bridged peptide 2.4</fullName>
        <shortName evidence="5">NDBP-2.4</shortName>
    </alternativeName>
    <alternativeName>
        <fullName evidence="4">Non-disulfide-bridged peptide 3.5</fullName>
        <shortName evidence="4">NDBP-3.5</shortName>
    </alternativeName>
    <alternativeName>
        <fullName>Opistoporin-3</fullName>
        <shortName>OP3</shortName>
    </alternativeName>
</protein>
<organism>
    <name type="scientific">Opistophthalmus carinatus</name>
    <name type="common">African yellow leg scorpion</name>
    <dbReference type="NCBI Taxonomy" id="190115"/>
    <lineage>
        <taxon>Eukaryota</taxon>
        <taxon>Metazoa</taxon>
        <taxon>Ecdysozoa</taxon>
        <taxon>Arthropoda</taxon>
        <taxon>Chelicerata</taxon>
        <taxon>Arachnida</taxon>
        <taxon>Scorpiones</taxon>
        <taxon>Iurida</taxon>
        <taxon>Scorpionoidea</taxon>
        <taxon>Scorpionidae</taxon>
        <taxon>Opistophthalminae</taxon>
        <taxon>Opistophthalmus</taxon>
    </lineage>
</organism>
<proteinExistence type="evidence at protein level"/>
<name>NDB24_OPICA</name>
<feature type="signal peptide" evidence="1">
    <location>
        <begin position="1"/>
        <end position="22"/>
    </location>
</feature>
<feature type="chain" id="PRO_0000152879" description="Opistoporin-1" evidence="1">
    <location>
        <begin position="23"/>
        <end position="66"/>
    </location>
</feature>
<feature type="propeptide" id="PRO_0000356888" evidence="1">
    <location>
        <begin position="67"/>
        <end position="82"/>
    </location>
</feature>